<gene>
    <name evidence="1" type="primary">carS</name>
    <name type="ordered locus">Smar_0617</name>
</gene>
<keyword id="KW-1003">Cell membrane</keyword>
<keyword id="KW-0444">Lipid biosynthesis</keyword>
<keyword id="KW-0443">Lipid metabolism</keyword>
<keyword id="KW-0460">Magnesium</keyword>
<keyword id="KW-0472">Membrane</keyword>
<keyword id="KW-0594">Phospholipid biosynthesis</keyword>
<keyword id="KW-1208">Phospholipid metabolism</keyword>
<keyword id="KW-1185">Reference proteome</keyword>
<keyword id="KW-0808">Transferase</keyword>
<keyword id="KW-0812">Transmembrane</keyword>
<keyword id="KW-1133">Transmembrane helix</keyword>
<comment type="function">
    <text evidence="1">Catalyzes the formation of CDP-2,3-bis-(O-geranylgeranyl)-sn-glycerol (CDP-archaeol) from 2,3-bis-(O-geranylgeranyl)-sn-glycerol 1-phosphate (DGGGP) and CTP. This reaction is the third ether-bond-formation step in the biosynthesis of archaeal membrane lipids.</text>
</comment>
<comment type="catalytic activity">
    <reaction evidence="1">
        <text>2,3-bis-O-(geranylgeranyl)-sn-glycerol 1-phosphate + CTP + H(+) = CDP-2,3-bis-O-(geranylgeranyl)-sn-glycerol + diphosphate</text>
        <dbReference type="Rhea" id="RHEA:25690"/>
        <dbReference type="ChEBI" id="CHEBI:15378"/>
        <dbReference type="ChEBI" id="CHEBI:33019"/>
        <dbReference type="ChEBI" id="CHEBI:37563"/>
        <dbReference type="ChEBI" id="CHEBI:58837"/>
        <dbReference type="ChEBI" id="CHEBI:58838"/>
        <dbReference type="EC" id="2.7.7.67"/>
    </reaction>
</comment>
<comment type="cofactor">
    <cofactor evidence="1">
        <name>Mg(2+)</name>
        <dbReference type="ChEBI" id="CHEBI:18420"/>
    </cofactor>
</comment>
<comment type="pathway">
    <text evidence="1">Membrane lipid metabolism; glycerophospholipid metabolism.</text>
</comment>
<comment type="subcellular location">
    <subcellularLocation>
        <location evidence="1">Cell membrane</location>
        <topology evidence="1">Multi-pass membrane protein</topology>
    </subcellularLocation>
</comment>
<comment type="similarity">
    <text evidence="1">Belongs to the CDP-archaeol synthase family.</text>
</comment>
<evidence type="ECO:0000255" key="1">
    <source>
        <dbReference type="HAMAP-Rule" id="MF_01117"/>
    </source>
</evidence>
<dbReference type="EC" id="2.7.7.67" evidence="1"/>
<dbReference type="EMBL" id="CP000575">
    <property type="protein sequence ID" value="ABN69724.1"/>
    <property type="molecule type" value="Genomic_DNA"/>
</dbReference>
<dbReference type="RefSeq" id="WP_011838915.1">
    <property type="nucleotide sequence ID" value="NC_009033.1"/>
</dbReference>
<dbReference type="SMR" id="A3DM64"/>
<dbReference type="STRING" id="399550.Smar_0617"/>
<dbReference type="GeneID" id="4907936"/>
<dbReference type="KEGG" id="smr:Smar_0617"/>
<dbReference type="eggNOG" id="arCOG04106">
    <property type="taxonomic scope" value="Archaea"/>
</dbReference>
<dbReference type="HOGENOM" id="CLU_105710_0_0_2"/>
<dbReference type="UniPathway" id="UPA00940"/>
<dbReference type="Proteomes" id="UP000000254">
    <property type="component" value="Chromosome"/>
</dbReference>
<dbReference type="GO" id="GO:0005886">
    <property type="term" value="C:plasma membrane"/>
    <property type="evidence" value="ECO:0007669"/>
    <property type="project" value="UniProtKB-SubCell"/>
</dbReference>
<dbReference type="GO" id="GO:0043338">
    <property type="term" value="F:CDP-2,3-bis-(O-geranylgeranyl)-sn-glycerol synthase activity"/>
    <property type="evidence" value="ECO:0007669"/>
    <property type="project" value="UniProtKB-EC"/>
</dbReference>
<dbReference type="GO" id="GO:0046474">
    <property type="term" value="P:glycerophospholipid biosynthetic process"/>
    <property type="evidence" value="ECO:0007669"/>
    <property type="project" value="UniProtKB-UniRule"/>
</dbReference>
<dbReference type="HAMAP" id="MF_01117">
    <property type="entry name" value="CDP_archaeol_synth"/>
    <property type="match status" value="1"/>
</dbReference>
<dbReference type="InterPro" id="IPR032690">
    <property type="entry name" value="CarS"/>
</dbReference>
<dbReference type="InterPro" id="IPR002726">
    <property type="entry name" value="CarS_archaea"/>
</dbReference>
<dbReference type="NCBIfam" id="NF003114">
    <property type="entry name" value="PRK04032.1"/>
    <property type="match status" value="1"/>
</dbReference>
<dbReference type="PANTHER" id="PTHR39650">
    <property type="entry name" value="CDP-ARCHAEOL SYNTHASE"/>
    <property type="match status" value="1"/>
</dbReference>
<dbReference type="PANTHER" id="PTHR39650:SF1">
    <property type="entry name" value="CDP-ARCHAEOL SYNTHASE"/>
    <property type="match status" value="1"/>
</dbReference>
<dbReference type="Pfam" id="PF01864">
    <property type="entry name" value="CarS-like"/>
    <property type="match status" value="1"/>
</dbReference>
<feature type="chain" id="PRO_0000298288" description="CDP-archaeol synthase">
    <location>
        <begin position="1"/>
        <end position="176"/>
    </location>
</feature>
<feature type="transmembrane region" description="Helical" evidence="1">
    <location>
        <begin position="12"/>
        <end position="32"/>
    </location>
</feature>
<feature type="transmembrane region" description="Helical" evidence="1">
    <location>
        <begin position="60"/>
        <end position="80"/>
    </location>
</feature>
<feature type="transmembrane region" description="Helical" evidence="1">
    <location>
        <begin position="85"/>
        <end position="105"/>
    </location>
</feature>
<feature type="transmembrane region" description="Helical" evidence="1">
    <location>
        <begin position="118"/>
        <end position="138"/>
    </location>
</feature>
<feature type="transmembrane region" description="Helical" evidence="1">
    <location>
        <begin position="141"/>
        <end position="161"/>
    </location>
</feature>
<organism>
    <name type="scientific">Staphylothermus marinus (strain ATCC 43588 / DSM 3639 / JCM 9404 / F1)</name>
    <dbReference type="NCBI Taxonomy" id="399550"/>
    <lineage>
        <taxon>Archaea</taxon>
        <taxon>Thermoproteota</taxon>
        <taxon>Thermoprotei</taxon>
        <taxon>Desulfurococcales</taxon>
        <taxon>Desulfurococcaceae</taxon>
        <taxon>Staphylothermus</taxon>
    </lineage>
</organism>
<reference key="1">
    <citation type="journal article" date="2009" name="BMC Genomics">
        <title>The complete genome sequence of Staphylothermus marinus reveals differences in sulfur metabolism among heterotrophic Crenarchaeota.</title>
        <authorList>
            <person name="Anderson I.J."/>
            <person name="Dharmarajan L."/>
            <person name="Rodriguez J."/>
            <person name="Hooper S."/>
            <person name="Porat I."/>
            <person name="Ulrich L.E."/>
            <person name="Elkins J.G."/>
            <person name="Mavromatis K."/>
            <person name="Sun H."/>
            <person name="Land M."/>
            <person name="Lapidus A."/>
            <person name="Lucas S."/>
            <person name="Barry K."/>
            <person name="Huber H."/>
            <person name="Zhulin I.B."/>
            <person name="Whitman W.B."/>
            <person name="Mukhopadhyay B."/>
            <person name="Woese C."/>
            <person name="Bristow J."/>
            <person name="Kyrpides N."/>
        </authorList>
    </citation>
    <scope>NUCLEOTIDE SEQUENCE [LARGE SCALE GENOMIC DNA]</scope>
    <source>
        <strain>ATCC 43588 / DSM 3639 / JCM 9404 / F1</strain>
    </source>
</reference>
<reference key="2">
    <citation type="journal article" date="2009" name="Stand. Genomic Sci.">
        <title>Complete genome sequence of Staphylothermus marinus Stetter and Fiala 1986 type strain F1.</title>
        <authorList>
            <person name="Anderson I.J."/>
            <person name="Sun H."/>
            <person name="Lapidus A."/>
            <person name="Copeland A."/>
            <person name="Glavina Del Rio T."/>
            <person name="Tice H."/>
            <person name="Dalin E."/>
            <person name="Lucas S."/>
            <person name="Barry K."/>
            <person name="Land M."/>
            <person name="Richardson P."/>
            <person name="Huber H."/>
            <person name="Kyrpides N.C."/>
        </authorList>
    </citation>
    <scope>NUCLEOTIDE SEQUENCE [LARGE SCALE GENOMIC DNA]</scope>
    <source>
        <strain>ATCC 43588 / DSM 3639 / JCM 9404 / F1</strain>
    </source>
</reference>
<sequence>MSGYMISPEYYFIYWFLKYYLSPMIANASPVLVKGIHRIDFSHIFIDGKPLFGKNKTWEGFYVGVLMGFLTSIGIGIILCEEEYILIGLGSSIFALIGDLLGSFIKRRMNIASGEPLPIIDQLDFALMATLYYYFLGIEEFISYPLYILYSLIIILALHIITNNIAYYLGVKDKRW</sequence>
<protein>
    <recommendedName>
        <fullName evidence="1">CDP-archaeol synthase</fullName>
        <ecNumber evidence="1">2.7.7.67</ecNumber>
    </recommendedName>
    <alternativeName>
        <fullName evidence="1">CDP-2,3-bis-(O-geranylgeranyl)-sn-glycerol synthase</fullName>
    </alternativeName>
</protein>
<accession>A3DM64</accession>
<proteinExistence type="inferred from homology"/>
<name>CDPAS_STAMF</name>